<proteinExistence type="evidence at transcript level"/>
<comment type="function">
    <text evidence="1 2">In unstressed cells, promotes SIAH1-mediated polyubiquitination and degradation of the serine/threonine-protein kinase HIPK2, probably by acting as a loading factor that potentiates complex formation between HIPK2 and ubiquitin ligase SIAH1 (By similarity). In response to DNA damage, localizes to the nucleus following phosphorylation by HIPK2 and modulates the expression of a subset of TP53/p53 target genes by binding to TP53 at target gene promoters (By similarity). This limits the expression of a number of cell death-mediating TP53 target genes, reducing DNA damage-induced cell death (By similarity). Enhances the binding of transcription factor TCF7L2/TCF4, a Wnt signaling pathway effector, to the promoters of target genes (By similarity). Plays a role in stress granule formation (By similarity).</text>
</comment>
<comment type="subunit">
    <text evidence="1 2">Interacts with SOX6. Interacts with DAZ1 and DAZL. Interacts with IL17RB. May interact with FAM168B. Interacts with INCA1. Interacts with EIF4G1 and EIF4G2 (By similarity). Interacts (via PPAY motif) with NEDD4 (via WW domains) (By similarity). Interacts with transcription factor TCF4; the interaction results in localization of DAZAP2 to the nucleus (By similarity). Interacts with transcription factors TCF7 and TCF7L1 (By similarity). Interacts with transcription factor LEF1 (By similarity). Interacts with serine/threonine-protein kinase HIPK2; the interaction results in phosphorylation of DAZAP2 which causes localization of DAZAP2 to the nucleus, reduces interaction of DAZAP2 with HIPK2 and prevents DAZAP2-dependent degradation of HIPK2 (By similarity). Interacts with ubiquitin ligase SIAH1; the interaction is decreased following phosphorylation of DAZAP2 by HIPK2 (By similarity). Interacts with TP53; the interaction is triggered by DNA damage (By similarity).</text>
</comment>
<comment type="subcellular location">
    <subcellularLocation>
        <location evidence="1">Cytoplasm</location>
    </subcellularLocation>
    <subcellularLocation>
        <location evidence="1">Nucleus</location>
    </subcellularLocation>
    <subcellularLocation>
        <location evidence="1">Nucleus speckle</location>
    </subcellularLocation>
    <subcellularLocation>
        <location evidence="1">Nucleus</location>
        <location evidence="1">Nuclear body</location>
    </subcellularLocation>
    <subcellularLocation>
        <location evidence="1">Cytoplasm</location>
        <location evidence="1">Stress granule</location>
    </subcellularLocation>
    <text evidence="1">Predominantly nuclear in macrophages, stimulation of IL17RB with its ligand IL17E induces accumulation in the cytoplasm (By similarity). Predominantly cytoplasmic when unphosphorylated and localizes to the nucleus following phosphorylation by HIPK2 (By similarity). Localizes to stress granules under cellular stress conditions (By similarity).</text>
</comment>
<comment type="PTM">
    <text evidence="1">Ubiquitinated by SMURF2, leading to proteasomal degradation. Ubiquitinated by NEDD4, leading to proteasomal degradation.</text>
</comment>
<comment type="PTM">
    <text evidence="1">Following DNA damage, phosphorylated by HIPK2 which promotes DAZAP2 localization to the nucleus, reduces interaction of DAZAP2 with HIPK2 and SIAH1, and prevents DAZAP2-dependent ubiquitination of HIPK2 by E3 ubiquitin-protein ligase SIAH1 and subsequent HIPK2 proteasomal degradation.</text>
</comment>
<name>DAZP2_BOVIN</name>
<evidence type="ECO:0000250" key="1">
    <source>
        <dbReference type="UniProtKB" id="Q15038"/>
    </source>
</evidence>
<evidence type="ECO:0000250" key="2">
    <source>
        <dbReference type="UniProtKB" id="Q9DCP9"/>
    </source>
</evidence>
<evidence type="ECO:0000256" key="3">
    <source>
        <dbReference type="SAM" id="MobiDB-lite"/>
    </source>
</evidence>
<gene>
    <name evidence="1" type="primary">DAZAP2</name>
    <name evidence="1" type="synonym">PRTB</name>
</gene>
<sequence length="168" mass="17319">MNSKGQYPTQPTYPVQPPGNPVYPQTLHLPQAPPYTDAPPAYSELYRPSFVHPGAATVPTMSAAFPGASLYLPMAQSVAVGPLGSTIPMAYYPVGPIYPPGSTVLVEGGYDAGARFGAGATAGNIPPPPPGCPPNAAQLAVMQGANVLVTQRKGNFFMGGSDGGYTIW</sequence>
<reference key="1">
    <citation type="submission" date="2005-08" db="EMBL/GenBank/DDBJ databases">
        <authorList>
            <consortium name="NIH - Mammalian Gene Collection (MGC) project"/>
        </authorList>
    </citation>
    <scope>NUCLEOTIDE SEQUENCE [LARGE SCALE MRNA]</scope>
    <source>
        <strain>Crossbred X Angus</strain>
        <tissue>Ileum</tissue>
    </source>
</reference>
<protein>
    <recommendedName>
        <fullName evidence="1">DAZ-associated protein 2</fullName>
    </recommendedName>
    <alternativeName>
        <fullName>Deleted in azoospermia-associated protein 2</fullName>
    </alternativeName>
    <alternativeName>
        <fullName evidence="1">Proline-rich transcript in brain protein</fullName>
    </alternativeName>
</protein>
<feature type="chain" id="PRO_0000285817" description="DAZ-associated protein 2">
    <location>
        <begin position="1"/>
        <end position="168"/>
    </location>
</feature>
<feature type="region of interest" description="Disordered" evidence="3">
    <location>
        <begin position="1"/>
        <end position="25"/>
    </location>
</feature>
<feature type="short sequence motif" description="PPAY" evidence="1">
    <location>
        <begin position="39"/>
        <end position="42"/>
    </location>
</feature>
<feature type="compositionally biased region" description="Low complexity" evidence="3">
    <location>
        <begin position="1"/>
        <end position="13"/>
    </location>
</feature>
<feature type="modified residue" description="Phosphoserine" evidence="1">
    <location>
        <position position="77"/>
    </location>
</feature>
<dbReference type="EMBL" id="BC102352">
    <property type="protein sequence ID" value="AAI02353.1"/>
    <property type="molecule type" value="mRNA"/>
</dbReference>
<dbReference type="RefSeq" id="NP_001029873.1">
    <property type="nucleotide sequence ID" value="NM_001034701.1"/>
</dbReference>
<dbReference type="FunCoup" id="Q3T0K9">
    <property type="interactions" value="1714"/>
</dbReference>
<dbReference type="STRING" id="9913.ENSBTAP00000002573"/>
<dbReference type="PaxDb" id="9913-ENSBTAP00000002573"/>
<dbReference type="Ensembl" id="ENSBTAT00000002573.3">
    <property type="protein sequence ID" value="ENSBTAP00000002573.2"/>
    <property type="gene ID" value="ENSBTAG00000004349.6"/>
</dbReference>
<dbReference type="GeneID" id="540286"/>
<dbReference type="KEGG" id="bta:540286"/>
<dbReference type="CTD" id="9802"/>
<dbReference type="VEuPathDB" id="HostDB:ENSBTAG00000004349"/>
<dbReference type="VGNC" id="VGNC:27886">
    <property type="gene designation" value="DAZAP2"/>
</dbReference>
<dbReference type="eggNOG" id="ENOG502QTNQ">
    <property type="taxonomic scope" value="Eukaryota"/>
</dbReference>
<dbReference type="GeneTree" id="ENSGT00390000000685"/>
<dbReference type="HOGENOM" id="CLU_135110_0_0_1"/>
<dbReference type="InParanoid" id="Q3T0K9"/>
<dbReference type="OMA" id="IYQPRYM"/>
<dbReference type="OrthoDB" id="6514304at2759"/>
<dbReference type="TreeFam" id="TF329672"/>
<dbReference type="Proteomes" id="UP000009136">
    <property type="component" value="Chromosome 5"/>
</dbReference>
<dbReference type="Bgee" id="ENSBTAG00000004349">
    <property type="expression patterns" value="Expressed in leukocyte and 106 other cell types or tissues"/>
</dbReference>
<dbReference type="GO" id="GO:0005737">
    <property type="term" value="C:cytoplasm"/>
    <property type="evidence" value="ECO:0000250"/>
    <property type="project" value="UniProtKB"/>
</dbReference>
<dbReference type="GO" id="GO:0010494">
    <property type="term" value="C:cytoplasmic stress granule"/>
    <property type="evidence" value="ECO:0000250"/>
    <property type="project" value="UniProtKB"/>
</dbReference>
<dbReference type="GO" id="GO:0016604">
    <property type="term" value="C:nuclear body"/>
    <property type="evidence" value="ECO:0000250"/>
    <property type="project" value="UniProtKB"/>
</dbReference>
<dbReference type="GO" id="GO:0016607">
    <property type="term" value="C:nuclear speck"/>
    <property type="evidence" value="ECO:0000250"/>
    <property type="project" value="UniProtKB"/>
</dbReference>
<dbReference type="GO" id="GO:0005634">
    <property type="term" value="C:nucleus"/>
    <property type="evidence" value="ECO:0000250"/>
    <property type="project" value="UniProtKB"/>
</dbReference>
<dbReference type="GO" id="GO:0032991">
    <property type="term" value="C:protein-containing complex"/>
    <property type="evidence" value="ECO:0007669"/>
    <property type="project" value="Ensembl"/>
</dbReference>
<dbReference type="GO" id="GO:0140297">
    <property type="term" value="F:DNA-binding transcription factor binding"/>
    <property type="evidence" value="ECO:0007669"/>
    <property type="project" value="Ensembl"/>
</dbReference>
<dbReference type="GO" id="GO:0042802">
    <property type="term" value="F:identical protein binding"/>
    <property type="evidence" value="ECO:0007669"/>
    <property type="project" value="Ensembl"/>
</dbReference>
<dbReference type="GO" id="GO:0031435">
    <property type="term" value="F:mitogen-activated protein kinase kinase kinase binding"/>
    <property type="evidence" value="ECO:0007669"/>
    <property type="project" value="Ensembl"/>
</dbReference>
<dbReference type="GO" id="GO:0002039">
    <property type="term" value="F:p53 binding"/>
    <property type="evidence" value="ECO:0000250"/>
    <property type="project" value="UniProtKB"/>
</dbReference>
<dbReference type="GO" id="GO:0043539">
    <property type="term" value="F:protein serine/threonine kinase activator activity"/>
    <property type="evidence" value="ECO:0007669"/>
    <property type="project" value="Ensembl"/>
</dbReference>
<dbReference type="GO" id="GO:0120283">
    <property type="term" value="F:protein serine/threonine kinase binding"/>
    <property type="evidence" value="ECO:0000250"/>
    <property type="project" value="UniProtKB"/>
</dbReference>
<dbReference type="GO" id="GO:0030971">
    <property type="term" value="F:receptor tyrosine kinase binding"/>
    <property type="evidence" value="ECO:0007669"/>
    <property type="project" value="Ensembl"/>
</dbReference>
<dbReference type="GO" id="GO:0031625">
    <property type="term" value="F:ubiquitin protein ligase binding"/>
    <property type="evidence" value="ECO:0000250"/>
    <property type="project" value="UniProtKB"/>
</dbReference>
<dbReference type="GO" id="GO:0050699">
    <property type="term" value="F:WW domain binding"/>
    <property type="evidence" value="ECO:0007669"/>
    <property type="project" value="Ensembl"/>
</dbReference>
<dbReference type="GO" id="GO:1905636">
    <property type="term" value="P:positive regulation of RNA polymerase II regulatory region sequence-specific DNA binding"/>
    <property type="evidence" value="ECO:0000250"/>
    <property type="project" value="UniProtKB"/>
</dbReference>
<dbReference type="GO" id="GO:0031648">
    <property type="term" value="P:protein destabilization"/>
    <property type="evidence" value="ECO:0000250"/>
    <property type="project" value="UniProtKB"/>
</dbReference>
<dbReference type="GO" id="GO:0034063">
    <property type="term" value="P:stress granule assembly"/>
    <property type="evidence" value="ECO:0000250"/>
    <property type="project" value="UniProtKB"/>
</dbReference>
<dbReference type="InterPro" id="IPR022730">
    <property type="entry name" value="DAZ_assoc-2"/>
</dbReference>
<dbReference type="PANTHER" id="PTHR31638">
    <property type="entry name" value="DAZ-ASSOCIATED PROTEIN 2"/>
    <property type="match status" value="1"/>
</dbReference>
<dbReference type="PANTHER" id="PTHR31638:SF4">
    <property type="entry name" value="DAZ-ASSOCIATED PROTEIN 2"/>
    <property type="match status" value="1"/>
</dbReference>
<dbReference type="Pfam" id="PF11029">
    <property type="entry name" value="DAZAP2"/>
    <property type="match status" value="1"/>
</dbReference>
<keyword id="KW-0963">Cytoplasm</keyword>
<keyword id="KW-0539">Nucleus</keyword>
<keyword id="KW-0597">Phosphoprotein</keyword>
<keyword id="KW-1185">Reference proteome</keyword>
<keyword id="KW-0832">Ubl conjugation</keyword>
<organism>
    <name type="scientific">Bos taurus</name>
    <name type="common">Bovine</name>
    <dbReference type="NCBI Taxonomy" id="9913"/>
    <lineage>
        <taxon>Eukaryota</taxon>
        <taxon>Metazoa</taxon>
        <taxon>Chordata</taxon>
        <taxon>Craniata</taxon>
        <taxon>Vertebrata</taxon>
        <taxon>Euteleostomi</taxon>
        <taxon>Mammalia</taxon>
        <taxon>Eutheria</taxon>
        <taxon>Laurasiatheria</taxon>
        <taxon>Artiodactyla</taxon>
        <taxon>Ruminantia</taxon>
        <taxon>Pecora</taxon>
        <taxon>Bovidae</taxon>
        <taxon>Bovinae</taxon>
        <taxon>Bos</taxon>
    </lineage>
</organism>
<accession>Q3T0K9</accession>